<reference key="1">
    <citation type="journal article" date="2002" name="Nature">
        <title>The genome sequence of Schizosaccharomyces pombe.</title>
        <authorList>
            <person name="Wood V."/>
            <person name="Gwilliam R."/>
            <person name="Rajandream M.A."/>
            <person name="Lyne M.H."/>
            <person name="Lyne R."/>
            <person name="Stewart A."/>
            <person name="Sgouros J.G."/>
            <person name="Peat N."/>
            <person name="Hayles J."/>
            <person name="Baker S.G."/>
            <person name="Basham D."/>
            <person name="Bowman S."/>
            <person name="Brooks K."/>
            <person name="Brown D."/>
            <person name="Brown S."/>
            <person name="Chillingworth T."/>
            <person name="Churcher C.M."/>
            <person name="Collins M."/>
            <person name="Connor R."/>
            <person name="Cronin A."/>
            <person name="Davis P."/>
            <person name="Feltwell T."/>
            <person name="Fraser A."/>
            <person name="Gentles S."/>
            <person name="Goble A."/>
            <person name="Hamlin N."/>
            <person name="Harris D.E."/>
            <person name="Hidalgo J."/>
            <person name="Hodgson G."/>
            <person name="Holroyd S."/>
            <person name="Hornsby T."/>
            <person name="Howarth S."/>
            <person name="Huckle E.J."/>
            <person name="Hunt S."/>
            <person name="Jagels K."/>
            <person name="James K.D."/>
            <person name="Jones L."/>
            <person name="Jones M."/>
            <person name="Leather S."/>
            <person name="McDonald S."/>
            <person name="McLean J."/>
            <person name="Mooney P."/>
            <person name="Moule S."/>
            <person name="Mungall K.L."/>
            <person name="Murphy L.D."/>
            <person name="Niblett D."/>
            <person name="Odell C."/>
            <person name="Oliver K."/>
            <person name="O'Neil S."/>
            <person name="Pearson D."/>
            <person name="Quail M.A."/>
            <person name="Rabbinowitsch E."/>
            <person name="Rutherford K.M."/>
            <person name="Rutter S."/>
            <person name="Saunders D."/>
            <person name="Seeger K."/>
            <person name="Sharp S."/>
            <person name="Skelton J."/>
            <person name="Simmonds M.N."/>
            <person name="Squares R."/>
            <person name="Squares S."/>
            <person name="Stevens K."/>
            <person name="Taylor K."/>
            <person name="Taylor R.G."/>
            <person name="Tivey A."/>
            <person name="Walsh S.V."/>
            <person name="Warren T."/>
            <person name="Whitehead S."/>
            <person name="Woodward J.R."/>
            <person name="Volckaert G."/>
            <person name="Aert R."/>
            <person name="Robben J."/>
            <person name="Grymonprez B."/>
            <person name="Weltjens I."/>
            <person name="Vanstreels E."/>
            <person name="Rieger M."/>
            <person name="Schaefer M."/>
            <person name="Mueller-Auer S."/>
            <person name="Gabel C."/>
            <person name="Fuchs M."/>
            <person name="Duesterhoeft A."/>
            <person name="Fritzc C."/>
            <person name="Holzer E."/>
            <person name="Moestl D."/>
            <person name="Hilbert H."/>
            <person name="Borzym K."/>
            <person name="Langer I."/>
            <person name="Beck A."/>
            <person name="Lehrach H."/>
            <person name="Reinhardt R."/>
            <person name="Pohl T.M."/>
            <person name="Eger P."/>
            <person name="Zimmermann W."/>
            <person name="Wedler H."/>
            <person name="Wambutt R."/>
            <person name="Purnelle B."/>
            <person name="Goffeau A."/>
            <person name="Cadieu E."/>
            <person name="Dreano S."/>
            <person name="Gloux S."/>
            <person name="Lelaure V."/>
            <person name="Mottier S."/>
            <person name="Galibert F."/>
            <person name="Aves S.J."/>
            <person name="Xiang Z."/>
            <person name="Hunt C."/>
            <person name="Moore K."/>
            <person name="Hurst S.M."/>
            <person name="Lucas M."/>
            <person name="Rochet M."/>
            <person name="Gaillardin C."/>
            <person name="Tallada V.A."/>
            <person name="Garzon A."/>
            <person name="Thode G."/>
            <person name="Daga R.R."/>
            <person name="Cruzado L."/>
            <person name="Jimenez J."/>
            <person name="Sanchez M."/>
            <person name="del Rey F."/>
            <person name="Benito J."/>
            <person name="Dominguez A."/>
            <person name="Revuelta J.L."/>
            <person name="Moreno S."/>
            <person name="Armstrong J."/>
            <person name="Forsburg S.L."/>
            <person name="Cerutti L."/>
            <person name="Lowe T."/>
            <person name="McCombie W.R."/>
            <person name="Paulsen I."/>
            <person name="Potashkin J."/>
            <person name="Shpakovski G.V."/>
            <person name="Ussery D."/>
            <person name="Barrell B.G."/>
            <person name="Nurse P."/>
        </authorList>
    </citation>
    <scope>NUCLEOTIDE SEQUENCE [LARGE SCALE GENOMIC DNA]</scope>
    <source>
        <strain>972 / ATCC 24843</strain>
    </source>
</reference>
<reference key="2">
    <citation type="journal article" date="2011" name="Science">
        <title>Comparative functional genomics of the fission yeasts.</title>
        <authorList>
            <person name="Rhind N."/>
            <person name="Chen Z."/>
            <person name="Yassour M."/>
            <person name="Thompson D.A."/>
            <person name="Haas B.J."/>
            <person name="Habib N."/>
            <person name="Wapinski I."/>
            <person name="Roy S."/>
            <person name="Lin M.F."/>
            <person name="Heiman D.I."/>
            <person name="Young S.K."/>
            <person name="Furuya K."/>
            <person name="Guo Y."/>
            <person name="Pidoux A."/>
            <person name="Chen H.M."/>
            <person name="Robbertse B."/>
            <person name="Goldberg J.M."/>
            <person name="Aoki K."/>
            <person name="Bayne E.H."/>
            <person name="Berlin A.M."/>
            <person name="Desjardins C.A."/>
            <person name="Dobbs E."/>
            <person name="Dukaj L."/>
            <person name="Fan L."/>
            <person name="FitzGerald M.G."/>
            <person name="French C."/>
            <person name="Gujja S."/>
            <person name="Hansen K."/>
            <person name="Keifenheim D."/>
            <person name="Levin J.Z."/>
            <person name="Mosher R.A."/>
            <person name="Mueller C.A."/>
            <person name="Pfiffner J."/>
            <person name="Priest M."/>
            <person name="Russ C."/>
            <person name="Smialowska A."/>
            <person name="Swoboda P."/>
            <person name="Sykes S.M."/>
            <person name="Vaughn M."/>
            <person name="Vengrova S."/>
            <person name="Yoder R."/>
            <person name="Zeng Q."/>
            <person name="Allshire R."/>
            <person name="Baulcombe D."/>
            <person name="Birren B.W."/>
            <person name="Brown W."/>
            <person name="Ekwall K."/>
            <person name="Kellis M."/>
            <person name="Leatherwood J."/>
            <person name="Levin H."/>
            <person name="Margalit H."/>
            <person name="Martienssen R."/>
            <person name="Nieduszynski C.A."/>
            <person name="Spatafora J.W."/>
            <person name="Friedman N."/>
            <person name="Dalgaard J.Z."/>
            <person name="Baumann P."/>
            <person name="Niki H."/>
            <person name="Regev A."/>
            <person name="Nusbaum C."/>
        </authorList>
    </citation>
    <scope>REVISION OF GENE MODEL</scope>
</reference>
<reference key="3">
    <citation type="journal article" date="2006" name="Nat. Biotechnol.">
        <title>ORFeome cloning and global analysis of protein localization in the fission yeast Schizosaccharomyces pombe.</title>
        <authorList>
            <person name="Matsuyama A."/>
            <person name="Arai R."/>
            <person name="Yashiroda Y."/>
            <person name="Shirai A."/>
            <person name="Kamata A."/>
            <person name="Sekido S."/>
            <person name="Kobayashi Y."/>
            <person name="Hashimoto A."/>
            <person name="Hamamoto M."/>
            <person name="Hiraoka Y."/>
            <person name="Horinouchi S."/>
            <person name="Yoshida M."/>
        </authorList>
    </citation>
    <scope>SUBCELLULAR LOCATION [LARGE SCALE ANALYSIS]</scope>
</reference>
<reference key="4">
    <citation type="journal article" date="2008" name="J. Proteome Res.">
        <title>Phosphoproteome analysis of fission yeast.</title>
        <authorList>
            <person name="Wilson-Grady J.T."/>
            <person name="Villen J."/>
            <person name="Gygi S.P."/>
        </authorList>
    </citation>
    <scope>PHOSPHORYLATION [LARGE SCALE ANALYSIS] AT SER-38</scope>
    <scope>IDENTIFICATION BY MASS SPECTROMETRY</scope>
</reference>
<name>NTPPA_SCHPO</name>
<comment type="function">
    <text evidence="1">Nucleoside triphosphate pyrophosphatase that hydrolyzes dTTP and UTP. May have a dual role in cell division arrest and in preventing the incorporation of modified nucleotides into cellular nucleic acids.</text>
</comment>
<comment type="catalytic activity">
    <reaction evidence="1">
        <text>dTTP + H2O = dTMP + diphosphate + H(+)</text>
        <dbReference type="Rhea" id="RHEA:28534"/>
        <dbReference type="ChEBI" id="CHEBI:15377"/>
        <dbReference type="ChEBI" id="CHEBI:15378"/>
        <dbReference type="ChEBI" id="CHEBI:33019"/>
        <dbReference type="ChEBI" id="CHEBI:37568"/>
        <dbReference type="ChEBI" id="CHEBI:63528"/>
        <dbReference type="EC" id="3.6.1.9"/>
    </reaction>
</comment>
<comment type="catalytic activity">
    <reaction evidence="1">
        <text>UTP + H2O = UMP + diphosphate + H(+)</text>
        <dbReference type="Rhea" id="RHEA:29395"/>
        <dbReference type="ChEBI" id="CHEBI:15377"/>
        <dbReference type="ChEBI" id="CHEBI:15378"/>
        <dbReference type="ChEBI" id="CHEBI:33019"/>
        <dbReference type="ChEBI" id="CHEBI:46398"/>
        <dbReference type="ChEBI" id="CHEBI:57865"/>
        <dbReference type="EC" id="3.6.1.9"/>
    </reaction>
</comment>
<comment type="cofactor">
    <cofactor evidence="1">
        <name>a divalent metal cation</name>
        <dbReference type="ChEBI" id="CHEBI:60240"/>
    </cofactor>
</comment>
<comment type="subcellular location">
    <subcellularLocation>
        <location evidence="2">Cytoplasm</location>
    </subcellularLocation>
    <subcellularLocation>
        <location evidence="2">Nucleus</location>
    </subcellularLocation>
</comment>
<comment type="similarity">
    <text evidence="4">Belongs to the Maf family. YhdE subfamily.</text>
</comment>
<keyword id="KW-0963">Cytoplasm</keyword>
<keyword id="KW-0378">Hydrolase</keyword>
<keyword id="KW-0546">Nucleotide metabolism</keyword>
<keyword id="KW-0539">Nucleus</keyword>
<keyword id="KW-0597">Phosphoprotein</keyword>
<keyword id="KW-1185">Reference proteome</keyword>
<dbReference type="EC" id="3.6.1.9" evidence="1"/>
<dbReference type="EMBL" id="CU329670">
    <property type="protein sequence ID" value="CAB16279.2"/>
    <property type="molecule type" value="Genomic_DNA"/>
</dbReference>
<dbReference type="PIR" id="T38722">
    <property type="entry name" value="T38722"/>
</dbReference>
<dbReference type="SMR" id="O14141"/>
<dbReference type="BioGRID" id="279638">
    <property type="interactions" value="6"/>
</dbReference>
<dbReference type="FunCoup" id="O14141">
    <property type="interactions" value="52"/>
</dbReference>
<dbReference type="STRING" id="284812.O14141"/>
<dbReference type="iPTMnet" id="O14141"/>
<dbReference type="PaxDb" id="4896-SPAC3G6.03c.1"/>
<dbReference type="EnsemblFungi" id="SPAC3G6.03c.1">
    <property type="protein sequence ID" value="SPAC3G6.03c.1:pep"/>
    <property type="gene ID" value="SPAC3G6.03c"/>
</dbReference>
<dbReference type="KEGG" id="spo:2543209"/>
<dbReference type="PomBase" id="SPAC3G6.03c"/>
<dbReference type="VEuPathDB" id="FungiDB:SPAC3G6.03c"/>
<dbReference type="eggNOG" id="KOG1509">
    <property type="taxonomic scope" value="Eukaryota"/>
</dbReference>
<dbReference type="HOGENOM" id="CLU_040416_0_2_1"/>
<dbReference type="InParanoid" id="O14141"/>
<dbReference type="OMA" id="VIGCDSV"/>
<dbReference type="PRO" id="PR:O14141"/>
<dbReference type="Proteomes" id="UP000002485">
    <property type="component" value="Chromosome I"/>
</dbReference>
<dbReference type="GO" id="GO:0005829">
    <property type="term" value="C:cytosol"/>
    <property type="evidence" value="ECO:0007005"/>
    <property type="project" value="PomBase"/>
</dbReference>
<dbReference type="GO" id="GO:0005634">
    <property type="term" value="C:nucleus"/>
    <property type="evidence" value="ECO:0007005"/>
    <property type="project" value="PomBase"/>
</dbReference>
<dbReference type="GO" id="GO:0036218">
    <property type="term" value="F:dTTP diphosphatase activity"/>
    <property type="evidence" value="ECO:0007669"/>
    <property type="project" value="RHEA"/>
</dbReference>
<dbReference type="GO" id="GO:0047429">
    <property type="term" value="F:nucleoside triphosphate diphosphatase activity"/>
    <property type="evidence" value="ECO:0000318"/>
    <property type="project" value="GO_Central"/>
</dbReference>
<dbReference type="GO" id="GO:0036221">
    <property type="term" value="F:UTP diphosphatase activity"/>
    <property type="evidence" value="ECO:0007669"/>
    <property type="project" value="RHEA"/>
</dbReference>
<dbReference type="GO" id="GO:1990748">
    <property type="term" value="P:cellular detoxification"/>
    <property type="evidence" value="ECO:0000255"/>
    <property type="project" value="PomBase"/>
</dbReference>
<dbReference type="GO" id="GO:0055086">
    <property type="term" value="P:nucleobase-containing small molecule metabolic process"/>
    <property type="evidence" value="ECO:0000255"/>
    <property type="project" value="PomBase"/>
</dbReference>
<dbReference type="GO" id="GO:0009117">
    <property type="term" value="P:nucleotide metabolic process"/>
    <property type="evidence" value="ECO:0007669"/>
    <property type="project" value="UniProtKB-KW"/>
</dbReference>
<dbReference type="CDD" id="cd00555">
    <property type="entry name" value="Maf"/>
    <property type="match status" value="1"/>
</dbReference>
<dbReference type="FunFam" id="3.90.950.10:FF:000029">
    <property type="entry name" value="Maf-like protein yhdE"/>
    <property type="match status" value="1"/>
</dbReference>
<dbReference type="Gene3D" id="3.90.950.10">
    <property type="match status" value="1"/>
</dbReference>
<dbReference type="HAMAP" id="MF_00528">
    <property type="entry name" value="Maf"/>
    <property type="match status" value="1"/>
</dbReference>
<dbReference type="InterPro" id="IPR029001">
    <property type="entry name" value="ITPase-like_fam"/>
</dbReference>
<dbReference type="InterPro" id="IPR003697">
    <property type="entry name" value="Maf-like"/>
</dbReference>
<dbReference type="NCBIfam" id="TIGR00172">
    <property type="entry name" value="maf"/>
    <property type="match status" value="1"/>
</dbReference>
<dbReference type="PANTHER" id="PTHR43213">
    <property type="entry name" value="BIFUNCTIONAL DTTP/UTP PYROPHOSPHATASE/METHYLTRANSFERASE PROTEIN-RELATED"/>
    <property type="match status" value="1"/>
</dbReference>
<dbReference type="PANTHER" id="PTHR43213:SF5">
    <property type="entry name" value="BIFUNCTIONAL DTTP_UTP PYROPHOSPHATASE_METHYLTRANSFERASE PROTEIN-RELATED"/>
    <property type="match status" value="1"/>
</dbReference>
<dbReference type="Pfam" id="PF02545">
    <property type="entry name" value="Maf"/>
    <property type="match status" value="1"/>
</dbReference>
<dbReference type="PIRSF" id="PIRSF006305">
    <property type="entry name" value="Maf"/>
    <property type="match status" value="1"/>
</dbReference>
<dbReference type="SUPFAM" id="SSF52972">
    <property type="entry name" value="ITPase-like"/>
    <property type="match status" value="1"/>
</dbReference>
<proteinExistence type="evidence at protein level"/>
<sequence>MSNEKMDTSPPSYDSHFTLETSMHRQLKDKRIILASGSPRRKQLFEQMGFPNVETCVSGFPEDLNKSMYITPWEYAADTSVQKAIAVYEKLAAEEDSPDIVVSADTILILDSEIMEKPNDPKHHLAMLKKLRNSKTPHKVFTAVSVIVPMEVPIHPGYVMKTHLEETQVKFDPSITDEFLEAYVRCGEGSDKAGGYAIQGHGALLIESIIGDFSNVVGLPIRATFKLMEEALEQGDADNYD</sequence>
<feature type="chain" id="PRO_0000123090" description="dTTP/UTP pyrophosphatase">
    <location>
        <begin position="1"/>
        <end position="241"/>
    </location>
</feature>
<feature type="active site" description="Proton acceptor" evidence="1">
    <location>
        <position position="105"/>
    </location>
</feature>
<feature type="site" description="Important for substrate specificity" evidence="1">
    <location>
        <position position="40"/>
    </location>
</feature>
<feature type="site" description="Important for substrate specificity" evidence="1">
    <location>
        <position position="106"/>
    </location>
</feature>
<feature type="site" description="Important for substrate specificity" evidence="1">
    <location>
        <position position="199"/>
    </location>
</feature>
<feature type="modified residue" description="Phosphoserine" evidence="3">
    <location>
        <position position="38"/>
    </location>
</feature>
<accession>O14141</accession>
<gene>
    <name type="ORF">SPAC3G6.03c</name>
</gene>
<organism>
    <name type="scientific">Schizosaccharomyces pombe (strain 972 / ATCC 24843)</name>
    <name type="common">Fission yeast</name>
    <dbReference type="NCBI Taxonomy" id="284812"/>
    <lineage>
        <taxon>Eukaryota</taxon>
        <taxon>Fungi</taxon>
        <taxon>Dikarya</taxon>
        <taxon>Ascomycota</taxon>
        <taxon>Taphrinomycotina</taxon>
        <taxon>Schizosaccharomycetes</taxon>
        <taxon>Schizosaccharomycetales</taxon>
        <taxon>Schizosaccharomycetaceae</taxon>
        <taxon>Schizosaccharomyces</taxon>
    </lineage>
</organism>
<evidence type="ECO:0000250" key="1">
    <source>
        <dbReference type="UniProtKB" id="Q99210"/>
    </source>
</evidence>
<evidence type="ECO:0000269" key="2">
    <source>
    </source>
</evidence>
<evidence type="ECO:0000269" key="3">
    <source>
    </source>
</evidence>
<evidence type="ECO:0000305" key="4"/>
<protein>
    <recommendedName>
        <fullName evidence="1">dTTP/UTP pyrophosphatase</fullName>
        <shortName evidence="1">dTTPase/UTPase</shortName>
        <ecNumber evidence="1">3.6.1.9</ecNumber>
    </recommendedName>
    <alternativeName>
        <fullName>Maf-like protein C3G6.03c</fullName>
    </alternativeName>
    <alternativeName>
        <fullName evidence="1">Nucleoside triphosphate pyrophosphatase</fullName>
    </alternativeName>
    <alternativeName>
        <fullName evidence="1">Nucleotide pyrophosphatase</fullName>
        <shortName evidence="1">Nucleotide PPase</shortName>
    </alternativeName>
</protein>